<feature type="chain" id="PRO_0000254321" description="ATP synthase subunit beta">
    <location>
        <begin position="1"/>
        <end position="481"/>
    </location>
</feature>
<feature type="binding site" evidence="1">
    <location>
        <begin position="154"/>
        <end position="161"/>
    </location>
    <ligand>
        <name>ATP</name>
        <dbReference type="ChEBI" id="CHEBI:30616"/>
    </ligand>
</feature>
<comment type="function">
    <text evidence="1">Produces ATP from ADP in the presence of a proton gradient across the membrane. The catalytic sites are hosted primarily by the beta subunits.</text>
</comment>
<comment type="catalytic activity">
    <reaction evidence="1">
        <text>ATP + H2O + 4 H(+)(in) = ADP + phosphate + 5 H(+)(out)</text>
        <dbReference type="Rhea" id="RHEA:57720"/>
        <dbReference type="ChEBI" id="CHEBI:15377"/>
        <dbReference type="ChEBI" id="CHEBI:15378"/>
        <dbReference type="ChEBI" id="CHEBI:30616"/>
        <dbReference type="ChEBI" id="CHEBI:43474"/>
        <dbReference type="ChEBI" id="CHEBI:456216"/>
        <dbReference type="EC" id="7.1.2.2"/>
    </reaction>
</comment>
<comment type="subunit">
    <text evidence="1">F-type ATPases have 2 components, CF(1) - the catalytic core - and CF(0) - the membrane proton channel. CF(1) has five subunits: alpha(3), beta(3), gamma(1), delta(1), epsilon(1). CF(0) has three main subunits: a(1), b(2) and c(9-12). The alpha and beta chains form an alternating ring which encloses part of the gamma chain. CF(1) is attached to CF(0) by a central stalk formed by the gamma and epsilon chains, while a peripheral stalk is formed by the delta and b chains.</text>
</comment>
<comment type="subcellular location">
    <subcellularLocation>
        <location evidence="1">Cell inner membrane</location>
        <topology evidence="1">Peripheral membrane protein</topology>
    </subcellularLocation>
</comment>
<comment type="similarity">
    <text evidence="1">Belongs to the ATPase alpha/beta chains family.</text>
</comment>
<proteinExistence type="inferred from homology"/>
<evidence type="ECO:0000255" key="1">
    <source>
        <dbReference type="HAMAP-Rule" id="MF_01347"/>
    </source>
</evidence>
<protein>
    <recommendedName>
        <fullName evidence="1">ATP synthase subunit beta</fullName>
        <ecNumber evidence="1">7.1.2.2</ecNumber>
    </recommendedName>
    <alternativeName>
        <fullName evidence="1">ATP synthase F1 sector subunit beta</fullName>
    </alternativeName>
    <alternativeName>
        <fullName evidence="1">F-ATPase subunit beta</fullName>
    </alternativeName>
</protein>
<dbReference type="EC" id="7.1.2.2" evidence="1"/>
<dbReference type="EMBL" id="CP000248">
    <property type="protein sequence ID" value="ABD26838.1"/>
    <property type="molecule type" value="Genomic_DNA"/>
</dbReference>
<dbReference type="RefSeq" id="WP_011446044.1">
    <property type="nucleotide sequence ID" value="NC_007794.1"/>
</dbReference>
<dbReference type="SMR" id="Q2G5N5"/>
<dbReference type="STRING" id="279238.Saro_2402"/>
<dbReference type="KEGG" id="nar:Saro_2402"/>
<dbReference type="eggNOG" id="COG0055">
    <property type="taxonomic scope" value="Bacteria"/>
</dbReference>
<dbReference type="HOGENOM" id="CLU_022398_0_2_5"/>
<dbReference type="Proteomes" id="UP000009134">
    <property type="component" value="Chromosome"/>
</dbReference>
<dbReference type="GO" id="GO:0005886">
    <property type="term" value="C:plasma membrane"/>
    <property type="evidence" value="ECO:0007669"/>
    <property type="project" value="UniProtKB-SubCell"/>
</dbReference>
<dbReference type="GO" id="GO:0045259">
    <property type="term" value="C:proton-transporting ATP synthase complex"/>
    <property type="evidence" value="ECO:0007669"/>
    <property type="project" value="UniProtKB-KW"/>
</dbReference>
<dbReference type="GO" id="GO:0005524">
    <property type="term" value="F:ATP binding"/>
    <property type="evidence" value="ECO:0007669"/>
    <property type="project" value="UniProtKB-UniRule"/>
</dbReference>
<dbReference type="GO" id="GO:0016887">
    <property type="term" value="F:ATP hydrolysis activity"/>
    <property type="evidence" value="ECO:0007669"/>
    <property type="project" value="InterPro"/>
</dbReference>
<dbReference type="GO" id="GO:0046933">
    <property type="term" value="F:proton-transporting ATP synthase activity, rotational mechanism"/>
    <property type="evidence" value="ECO:0007669"/>
    <property type="project" value="UniProtKB-UniRule"/>
</dbReference>
<dbReference type="CDD" id="cd18110">
    <property type="entry name" value="ATP-synt_F1_beta_C"/>
    <property type="match status" value="1"/>
</dbReference>
<dbReference type="CDD" id="cd18115">
    <property type="entry name" value="ATP-synt_F1_beta_N"/>
    <property type="match status" value="1"/>
</dbReference>
<dbReference type="CDD" id="cd01133">
    <property type="entry name" value="F1-ATPase_beta_CD"/>
    <property type="match status" value="1"/>
</dbReference>
<dbReference type="FunFam" id="1.10.1140.10:FF:000001">
    <property type="entry name" value="ATP synthase subunit beta"/>
    <property type="match status" value="1"/>
</dbReference>
<dbReference type="FunFam" id="2.40.10.170:FF:000005">
    <property type="entry name" value="ATP synthase subunit beta"/>
    <property type="match status" value="1"/>
</dbReference>
<dbReference type="FunFam" id="3.40.50.300:FF:000026">
    <property type="entry name" value="ATP synthase subunit beta"/>
    <property type="match status" value="1"/>
</dbReference>
<dbReference type="Gene3D" id="2.40.10.170">
    <property type="match status" value="1"/>
</dbReference>
<dbReference type="Gene3D" id="1.10.1140.10">
    <property type="entry name" value="Bovine Mitochondrial F1-atpase, Atp Synthase Beta Chain, Chain D, domain 3"/>
    <property type="match status" value="1"/>
</dbReference>
<dbReference type="Gene3D" id="3.40.50.300">
    <property type="entry name" value="P-loop containing nucleotide triphosphate hydrolases"/>
    <property type="match status" value="1"/>
</dbReference>
<dbReference type="HAMAP" id="MF_01347">
    <property type="entry name" value="ATP_synth_beta_bact"/>
    <property type="match status" value="1"/>
</dbReference>
<dbReference type="InterPro" id="IPR003593">
    <property type="entry name" value="AAA+_ATPase"/>
</dbReference>
<dbReference type="InterPro" id="IPR055190">
    <property type="entry name" value="ATP-synt_VA_C"/>
</dbReference>
<dbReference type="InterPro" id="IPR005722">
    <property type="entry name" value="ATP_synth_F1_bsu"/>
</dbReference>
<dbReference type="InterPro" id="IPR020003">
    <property type="entry name" value="ATPase_a/bsu_AS"/>
</dbReference>
<dbReference type="InterPro" id="IPR050053">
    <property type="entry name" value="ATPase_alpha/beta_chains"/>
</dbReference>
<dbReference type="InterPro" id="IPR004100">
    <property type="entry name" value="ATPase_F1/V1/A1_a/bsu_N"/>
</dbReference>
<dbReference type="InterPro" id="IPR036121">
    <property type="entry name" value="ATPase_F1/V1/A1_a/bsu_N_sf"/>
</dbReference>
<dbReference type="InterPro" id="IPR000194">
    <property type="entry name" value="ATPase_F1/V1/A1_a/bsu_nucl-bd"/>
</dbReference>
<dbReference type="InterPro" id="IPR024034">
    <property type="entry name" value="ATPase_F1/V1_b/a_C"/>
</dbReference>
<dbReference type="InterPro" id="IPR027417">
    <property type="entry name" value="P-loop_NTPase"/>
</dbReference>
<dbReference type="NCBIfam" id="TIGR01039">
    <property type="entry name" value="atpD"/>
    <property type="match status" value="1"/>
</dbReference>
<dbReference type="PANTHER" id="PTHR15184">
    <property type="entry name" value="ATP SYNTHASE"/>
    <property type="match status" value="1"/>
</dbReference>
<dbReference type="PANTHER" id="PTHR15184:SF71">
    <property type="entry name" value="ATP SYNTHASE SUBUNIT BETA, MITOCHONDRIAL"/>
    <property type="match status" value="1"/>
</dbReference>
<dbReference type="Pfam" id="PF00006">
    <property type="entry name" value="ATP-synt_ab"/>
    <property type="match status" value="1"/>
</dbReference>
<dbReference type="Pfam" id="PF02874">
    <property type="entry name" value="ATP-synt_ab_N"/>
    <property type="match status" value="1"/>
</dbReference>
<dbReference type="Pfam" id="PF22919">
    <property type="entry name" value="ATP-synt_VA_C"/>
    <property type="match status" value="1"/>
</dbReference>
<dbReference type="PIRSF" id="PIRSF039072">
    <property type="entry name" value="ATPase_subunit_beta"/>
    <property type="match status" value="1"/>
</dbReference>
<dbReference type="SMART" id="SM00382">
    <property type="entry name" value="AAA"/>
    <property type="match status" value="1"/>
</dbReference>
<dbReference type="SUPFAM" id="SSF47917">
    <property type="entry name" value="C-terminal domain of alpha and beta subunits of F1 ATP synthase"/>
    <property type="match status" value="1"/>
</dbReference>
<dbReference type="SUPFAM" id="SSF50615">
    <property type="entry name" value="N-terminal domain of alpha and beta subunits of F1 ATP synthase"/>
    <property type="match status" value="1"/>
</dbReference>
<dbReference type="SUPFAM" id="SSF52540">
    <property type="entry name" value="P-loop containing nucleoside triphosphate hydrolases"/>
    <property type="match status" value="1"/>
</dbReference>
<dbReference type="PROSITE" id="PS00152">
    <property type="entry name" value="ATPASE_ALPHA_BETA"/>
    <property type="match status" value="1"/>
</dbReference>
<reference key="1">
    <citation type="submission" date="2006-01" db="EMBL/GenBank/DDBJ databases">
        <title>Complete sequence of Novosphingobium aromaticivorans DSM 12444.</title>
        <authorList>
            <consortium name="US DOE Joint Genome Institute"/>
            <person name="Copeland A."/>
            <person name="Lucas S."/>
            <person name="Lapidus A."/>
            <person name="Barry K."/>
            <person name="Detter J.C."/>
            <person name="Glavina T."/>
            <person name="Hammon N."/>
            <person name="Israni S."/>
            <person name="Pitluck S."/>
            <person name="Chain P."/>
            <person name="Malfatti S."/>
            <person name="Shin M."/>
            <person name="Vergez L."/>
            <person name="Schmutz J."/>
            <person name="Larimer F."/>
            <person name="Land M."/>
            <person name="Kyrpides N."/>
            <person name="Ivanova N."/>
            <person name="Fredrickson J."/>
            <person name="Balkwill D."/>
            <person name="Romine M.F."/>
            <person name="Richardson P."/>
        </authorList>
    </citation>
    <scope>NUCLEOTIDE SEQUENCE [LARGE SCALE GENOMIC DNA]</scope>
    <source>
        <strain>ATCC 700278 / DSM 12444 / CCUG 56034 / CIP 105152 / NBRC 16084 / F199</strain>
    </source>
</reference>
<organism>
    <name type="scientific">Novosphingobium aromaticivorans (strain ATCC 700278 / DSM 12444 / CCUG 56034 / CIP 105152 / NBRC 16084 / F199)</name>
    <dbReference type="NCBI Taxonomy" id="279238"/>
    <lineage>
        <taxon>Bacteria</taxon>
        <taxon>Pseudomonadati</taxon>
        <taxon>Pseudomonadota</taxon>
        <taxon>Alphaproteobacteria</taxon>
        <taxon>Sphingomonadales</taxon>
        <taxon>Sphingomonadaceae</taxon>
        <taxon>Novosphingobium</taxon>
    </lineage>
</organism>
<sequence length="481" mass="51139">MATVLSSTGKISQVIGAVVDVTFDGELPAILSALETDNNGNRLVLEVAQHLGENTVRTIAMDSTDGLTRGQPVTNTGAQISVPVGPKTLGRIMNVIGEPIDERGPVGAEQTAPIHAKAPEFIEQSTEAAILVTGIKVIDLLAPYARGGKIGLFGGAGVGKTVLIQELINNIAKGHGGVSVFAGVGERTREGNDLYHEFLDAGVIAKDADGNPTPDGSKVALVFGQMNEPPGARARVALSGLTMAEYFRDQEGQDVLFFVDNIFRFTQAGSEVSALLGRIPSAVGYQPTLATDMGQLQERITSTTKGSITSVQAIYVPADDLTDPAPATSFAHLDATTTLNRAISELGIYPAVDPLDSTSRVLTPAVVGQEHYETARRVQETLQKYKSLQDIIAILGMDELSEEDKLTVARARKIQRFLSQPFHVAEVFTGIPGKFVQVEDTVRSFKAVVDGEYDHLPEAAFYMVGGIDEAVEKAKKLAAEA</sequence>
<name>ATPB_NOVAD</name>
<gene>
    <name evidence="1" type="primary">atpD</name>
    <name type="ordered locus">Saro_2402</name>
</gene>
<keyword id="KW-0066">ATP synthesis</keyword>
<keyword id="KW-0067">ATP-binding</keyword>
<keyword id="KW-0997">Cell inner membrane</keyword>
<keyword id="KW-1003">Cell membrane</keyword>
<keyword id="KW-0139">CF(1)</keyword>
<keyword id="KW-0375">Hydrogen ion transport</keyword>
<keyword id="KW-0406">Ion transport</keyword>
<keyword id="KW-0472">Membrane</keyword>
<keyword id="KW-0547">Nucleotide-binding</keyword>
<keyword id="KW-1185">Reference proteome</keyword>
<keyword id="KW-1278">Translocase</keyword>
<keyword id="KW-0813">Transport</keyword>
<accession>Q2G5N5</accession>